<proteinExistence type="inferred from homology"/>
<feature type="signal peptide" evidence="2">
    <location>
        <begin position="1"/>
        <end position="18"/>
    </location>
</feature>
<feature type="chain" id="PRO_0000009457" description="Flagellar L-ring protein">
    <location>
        <begin position="19"/>
        <end position="229"/>
    </location>
</feature>
<feature type="lipid moiety-binding region" description="N-palmitoyl cysteine" evidence="2">
    <location>
        <position position="19"/>
    </location>
</feature>
<feature type="lipid moiety-binding region" description="S-diacylglycerol cysteine" evidence="2">
    <location>
        <position position="19"/>
    </location>
</feature>
<name>FLGH_PHOLL</name>
<protein>
    <recommendedName>
        <fullName>Flagellar L-ring protein</fullName>
    </recommendedName>
    <alternativeName>
        <fullName>Basal body L-ring protein</fullName>
    </alternativeName>
</protein>
<reference key="1">
    <citation type="journal article" date="2003" name="Nat. Biotechnol.">
        <title>The genome sequence of the entomopathogenic bacterium Photorhabdus luminescens.</title>
        <authorList>
            <person name="Duchaud E."/>
            <person name="Rusniok C."/>
            <person name="Frangeul L."/>
            <person name="Buchrieser C."/>
            <person name="Givaudan A."/>
            <person name="Taourit S."/>
            <person name="Bocs S."/>
            <person name="Boursaux-Eude C."/>
            <person name="Chandler M."/>
            <person name="Charles J.-F."/>
            <person name="Dassa E."/>
            <person name="Derose R."/>
            <person name="Derzelle S."/>
            <person name="Freyssinet G."/>
            <person name="Gaudriault S."/>
            <person name="Medigue C."/>
            <person name="Lanois A."/>
            <person name="Powell K."/>
            <person name="Siguier P."/>
            <person name="Vincent R."/>
            <person name="Wingate V."/>
            <person name="Zouine M."/>
            <person name="Glaser P."/>
            <person name="Boemare N."/>
            <person name="Danchin A."/>
            <person name="Kunst F."/>
        </authorList>
    </citation>
    <scope>NUCLEOTIDE SEQUENCE [LARGE SCALE GENOMIC DNA]</scope>
    <source>
        <strain>DSM 15139 / CIP 105565 / TT01</strain>
    </source>
</reference>
<organism>
    <name type="scientific">Photorhabdus laumondii subsp. laumondii (strain DSM 15139 / CIP 105565 / TT01)</name>
    <name type="common">Photorhabdus luminescens subsp. laumondii</name>
    <dbReference type="NCBI Taxonomy" id="243265"/>
    <lineage>
        <taxon>Bacteria</taxon>
        <taxon>Pseudomonadati</taxon>
        <taxon>Pseudomonadota</taxon>
        <taxon>Gammaproteobacteria</taxon>
        <taxon>Enterobacterales</taxon>
        <taxon>Morganellaceae</taxon>
        <taxon>Photorhabdus</taxon>
    </lineage>
</organism>
<comment type="function">
    <text evidence="1">Assembles around the rod to form the L-ring and probably protects the motor/basal body from shearing forces during rotation.</text>
</comment>
<comment type="subunit">
    <text evidence="1">The basal body constitutes a major portion of the flagellar organelle and consists of four rings (L,P,S, and M) mounted on a central rod.</text>
</comment>
<comment type="subcellular location">
    <subcellularLocation>
        <location evidence="1">Cell outer membrane</location>
        <topology evidence="1">Lipid-anchor</topology>
    </subcellularLocation>
    <subcellularLocation>
        <location evidence="1">Bacterial flagellum basal body</location>
    </subcellularLocation>
</comment>
<comment type="similarity">
    <text evidence="3">Belongs to the FlgH family.</text>
</comment>
<comment type="sequence caution" evidence="3">
    <conflict type="erroneous initiation">
        <sequence resource="EMBL-CDS" id="CAE14214"/>
    </conflict>
</comment>
<gene>
    <name type="primary">flgH</name>
    <name type="ordered locus">plu1921</name>
</gene>
<evidence type="ECO:0000250" key="1"/>
<evidence type="ECO:0000255" key="2"/>
<evidence type="ECO:0000305" key="3"/>
<keyword id="KW-0975">Bacterial flagellum</keyword>
<keyword id="KW-0998">Cell outer membrane</keyword>
<keyword id="KW-0449">Lipoprotein</keyword>
<keyword id="KW-0472">Membrane</keyword>
<keyword id="KW-0564">Palmitate</keyword>
<keyword id="KW-1185">Reference proteome</keyword>
<keyword id="KW-0732">Signal</keyword>
<dbReference type="EMBL" id="BX571865">
    <property type="protein sequence ID" value="CAE14214.1"/>
    <property type="status" value="ALT_INIT"/>
    <property type="molecule type" value="Genomic_DNA"/>
</dbReference>
<dbReference type="RefSeq" id="WP_173362523.1">
    <property type="nucleotide sequence ID" value="NC_005126.1"/>
</dbReference>
<dbReference type="SMR" id="Q7N5M7"/>
<dbReference type="STRING" id="243265.plu1921"/>
<dbReference type="GeneID" id="48848193"/>
<dbReference type="KEGG" id="plu:plu1921"/>
<dbReference type="eggNOG" id="COG2063">
    <property type="taxonomic scope" value="Bacteria"/>
</dbReference>
<dbReference type="HOGENOM" id="CLU_069313_0_0_6"/>
<dbReference type="Proteomes" id="UP000002514">
    <property type="component" value="Chromosome"/>
</dbReference>
<dbReference type="GO" id="GO:0009427">
    <property type="term" value="C:bacterial-type flagellum basal body, distal rod, L ring"/>
    <property type="evidence" value="ECO:0007669"/>
    <property type="project" value="InterPro"/>
</dbReference>
<dbReference type="GO" id="GO:0009279">
    <property type="term" value="C:cell outer membrane"/>
    <property type="evidence" value="ECO:0007669"/>
    <property type="project" value="UniProtKB-SubCell"/>
</dbReference>
<dbReference type="GO" id="GO:0003774">
    <property type="term" value="F:cytoskeletal motor activity"/>
    <property type="evidence" value="ECO:0007669"/>
    <property type="project" value="InterPro"/>
</dbReference>
<dbReference type="GO" id="GO:0071973">
    <property type="term" value="P:bacterial-type flagellum-dependent cell motility"/>
    <property type="evidence" value="ECO:0007669"/>
    <property type="project" value="InterPro"/>
</dbReference>
<dbReference type="HAMAP" id="MF_00415">
    <property type="entry name" value="FlgH"/>
    <property type="match status" value="1"/>
</dbReference>
<dbReference type="InterPro" id="IPR000527">
    <property type="entry name" value="Flag_Lring"/>
</dbReference>
<dbReference type="PANTHER" id="PTHR34933">
    <property type="entry name" value="FLAGELLAR L-RING PROTEIN"/>
    <property type="match status" value="1"/>
</dbReference>
<dbReference type="PANTHER" id="PTHR34933:SF3">
    <property type="entry name" value="FLAGELLAR L-RING PROTEIN"/>
    <property type="match status" value="1"/>
</dbReference>
<dbReference type="Pfam" id="PF02107">
    <property type="entry name" value="FlgH"/>
    <property type="match status" value="1"/>
</dbReference>
<dbReference type="PRINTS" id="PR01008">
    <property type="entry name" value="FLGLRINGFLGH"/>
</dbReference>
<dbReference type="PROSITE" id="PS51257">
    <property type="entry name" value="PROKAR_LIPOPROTEIN"/>
    <property type="match status" value="1"/>
</dbReference>
<sequence length="229" mass="24559">MANKWRCSIALAVLSLTGCAYIPQKPLVEGATTAAPSVATAPVPNGAIFQVVQPVYYGYQPLFEDRRPRNIGDTLTITLQENVSASKNSSANASRNGKNTFSAALTPRFLKGLIGGDKTDLDMEAENTFGGKGGANANNTFKGTITVTVDRLLANGNLHVVGEKQIAINQGTEFIRFSGVVNPRTINANNTVSSNQVADARIEYVGNGYINEAQNMGWLQRFFLNVAPF</sequence>
<accession>Q7N5M7</accession>